<organismHost>
    <name type="scientific">Escherichia coli</name>
    <dbReference type="NCBI Taxonomy" id="562"/>
</organismHost>
<reference key="1">
    <citation type="journal article" date="1992" name="J. Bacteriol.">
        <title>Sequence and characterization of the bacteriophage T4 comC alpha gene product, a possible transcription antitermination factor.</title>
        <authorList>
            <person name="Sanson B."/>
            <person name="Uzan M."/>
        </authorList>
    </citation>
    <scope>NUCLEOTIDE SEQUENCE [GENOMIC DNA]</scope>
</reference>
<reference key="2">
    <citation type="journal article" date="2003" name="Microbiol. Mol. Biol. Rev.">
        <title>Bacteriophage T4 genome.</title>
        <authorList>
            <person name="Miller E.S."/>
            <person name="Kutter E."/>
            <person name="Mosig G."/>
            <person name="Arisaka F."/>
            <person name="Kunisawa T."/>
            <person name="Ruger W."/>
        </authorList>
    </citation>
    <scope>NUCLEOTIDE SEQUENCE [LARGE SCALE GENOMIC DNA]</scope>
</reference>
<reference key="3">
    <citation type="journal article" date="1985" name="J. Mol. Biol.">
        <title>New control elements of bacteriophage T4 pre-replicative transcription.</title>
        <authorList>
            <person name="Pulitzer J.F."/>
            <person name="Colombo M."/>
            <person name="Ciaramella M."/>
        </authorList>
    </citation>
    <scope>FUNCTION</scope>
</reference>
<reference key="4">
    <citation type="journal article" date="2009" name="Prog. Mol. Biol. Transl. Sci.">
        <title>RNA processing and decay in bacteriophage T4.</title>
        <authorList>
            <person name="Uzan M."/>
        </authorList>
    </citation>
    <scope>REVIEW ON FUNCTION</scope>
</reference>
<feature type="chain" id="PRO_0000164920" description="Protein cef">
    <location>
        <begin position="1"/>
        <end position="71"/>
    </location>
</feature>
<comment type="function">
    <text evidence="1">Plays a role in the processing of a cluster of viral tRNAs.</text>
</comment>
<proteinExistence type="predicted"/>
<gene>
    <name type="primary">cef</name>
    <name type="synonym">mb</name>
</gene>
<organism>
    <name type="scientific">Enterobacteria phage T4</name>
    <name type="common">Bacteriophage T4</name>
    <dbReference type="NCBI Taxonomy" id="10665"/>
    <lineage>
        <taxon>Viruses</taxon>
        <taxon>Duplodnaviria</taxon>
        <taxon>Heunggongvirae</taxon>
        <taxon>Uroviricota</taxon>
        <taxon>Caudoviricetes</taxon>
        <taxon>Straboviridae</taxon>
        <taxon>Tevenvirinae</taxon>
        <taxon>Tequatrovirus</taxon>
    </lineage>
</organism>
<sequence>MKRKIVQNCTNDEFEDVLFDPNLVVVQKEHTSKFTHLTSVYVYEKVGDKQPIYGVFREITEDGTTYWKEIY</sequence>
<evidence type="ECO:0000269" key="1">
    <source>
    </source>
</evidence>
<accession>Q01436</accession>
<keyword id="KW-1185">Reference proteome</keyword>
<dbReference type="EMBL" id="M89919">
    <property type="protein sequence ID" value="AAA32484.1"/>
    <property type="molecule type" value="Genomic_DNA"/>
</dbReference>
<dbReference type="EMBL" id="AF158101">
    <property type="protein sequence ID" value="AAD42588.1"/>
    <property type="molecule type" value="Genomic_DNA"/>
</dbReference>
<dbReference type="PIR" id="B45731">
    <property type="entry name" value="B45731"/>
</dbReference>
<dbReference type="RefSeq" id="NP_049625.1">
    <property type="nucleotide sequence ID" value="NC_000866.4"/>
</dbReference>
<dbReference type="GeneID" id="1258628"/>
<dbReference type="KEGG" id="vg:1258628"/>
<dbReference type="OrthoDB" id="20741at10239"/>
<dbReference type="Proteomes" id="UP000009087">
    <property type="component" value="Segment"/>
</dbReference>
<dbReference type="InterPro" id="IPR056952">
    <property type="entry name" value="T4_Cef"/>
</dbReference>
<dbReference type="Pfam" id="PF24050">
    <property type="entry name" value="T4_Cef"/>
    <property type="match status" value="1"/>
</dbReference>
<protein>
    <recommendedName>
        <fullName>Protein cef</fullName>
    </recommendedName>
    <alternativeName>
        <fullName>MotC</fullName>
    </alternativeName>
</protein>
<name>CEF_BPT4</name>